<dbReference type="EC" id="3.1.1.4"/>
<dbReference type="EMBL" id="EF405872">
    <property type="protein sequence ID" value="ABN54807.1"/>
    <property type="molecule type" value="mRNA"/>
</dbReference>
<dbReference type="EMBL" id="AF144320">
    <property type="protein sequence ID" value="AAL55556.1"/>
    <property type="molecule type" value="mRNA"/>
</dbReference>
<dbReference type="SMR" id="Q8UW30"/>
<dbReference type="GO" id="GO:0005576">
    <property type="term" value="C:extracellular region"/>
    <property type="evidence" value="ECO:0007669"/>
    <property type="project" value="UniProtKB-SubCell"/>
</dbReference>
<dbReference type="GO" id="GO:0005509">
    <property type="term" value="F:calcium ion binding"/>
    <property type="evidence" value="ECO:0007669"/>
    <property type="project" value="InterPro"/>
</dbReference>
<dbReference type="GO" id="GO:0047498">
    <property type="term" value="F:calcium-dependent phospholipase A2 activity"/>
    <property type="evidence" value="ECO:0007669"/>
    <property type="project" value="TreeGrafter"/>
</dbReference>
<dbReference type="GO" id="GO:0005543">
    <property type="term" value="F:phospholipid binding"/>
    <property type="evidence" value="ECO:0007669"/>
    <property type="project" value="TreeGrafter"/>
</dbReference>
<dbReference type="GO" id="GO:0090729">
    <property type="term" value="F:toxin activity"/>
    <property type="evidence" value="ECO:0007669"/>
    <property type="project" value="UniProtKB-KW"/>
</dbReference>
<dbReference type="GO" id="GO:0050482">
    <property type="term" value="P:arachidonate secretion"/>
    <property type="evidence" value="ECO:0007669"/>
    <property type="project" value="InterPro"/>
</dbReference>
<dbReference type="GO" id="GO:0016042">
    <property type="term" value="P:lipid catabolic process"/>
    <property type="evidence" value="ECO:0007669"/>
    <property type="project" value="UniProtKB-KW"/>
</dbReference>
<dbReference type="GO" id="GO:0006644">
    <property type="term" value="P:phospholipid metabolic process"/>
    <property type="evidence" value="ECO:0007669"/>
    <property type="project" value="InterPro"/>
</dbReference>
<dbReference type="CDD" id="cd00125">
    <property type="entry name" value="PLA2c"/>
    <property type="match status" value="1"/>
</dbReference>
<dbReference type="FunFam" id="1.20.90.10:FF:000007">
    <property type="entry name" value="Acidic phospholipase A2"/>
    <property type="match status" value="1"/>
</dbReference>
<dbReference type="Gene3D" id="1.20.90.10">
    <property type="entry name" value="Phospholipase A2 domain"/>
    <property type="match status" value="1"/>
</dbReference>
<dbReference type="InterPro" id="IPR001211">
    <property type="entry name" value="PLipase_A2"/>
</dbReference>
<dbReference type="InterPro" id="IPR033112">
    <property type="entry name" value="PLipase_A2_Asp_AS"/>
</dbReference>
<dbReference type="InterPro" id="IPR016090">
    <property type="entry name" value="PLipase_A2_dom"/>
</dbReference>
<dbReference type="InterPro" id="IPR036444">
    <property type="entry name" value="PLipase_A2_dom_sf"/>
</dbReference>
<dbReference type="InterPro" id="IPR033113">
    <property type="entry name" value="PLipase_A2_His_AS"/>
</dbReference>
<dbReference type="PANTHER" id="PTHR11716:SF51">
    <property type="entry name" value="PHOSPHOLIPASE A2"/>
    <property type="match status" value="1"/>
</dbReference>
<dbReference type="PANTHER" id="PTHR11716">
    <property type="entry name" value="PHOSPHOLIPASE A2 FAMILY MEMBER"/>
    <property type="match status" value="1"/>
</dbReference>
<dbReference type="Pfam" id="PF00068">
    <property type="entry name" value="Phospholip_A2_1"/>
    <property type="match status" value="1"/>
</dbReference>
<dbReference type="PRINTS" id="PR00389">
    <property type="entry name" value="PHPHLIPASEA2"/>
</dbReference>
<dbReference type="SMART" id="SM00085">
    <property type="entry name" value="PA2c"/>
    <property type="match status" value="1"/>
</dbReference>
<dbReference type="SUPFAM" id="SSF48619">
    <property type="entry name" value="Phospholipase A2, PLA2"/>
    <property type="match status" value="1"/>
</dbReference>
<dbReference type="PROSITE" id="PS00119">
    <property type="entry name" value="PA2_ASP"/>
    <property type="match status" value="1"/>
</dbReference>
<dbReference type="PROSITE" id="PS00118">
    <property type="entry name" value="PA2_HIS"/>
    <property type="match status" value="1"/>
</dbReference>
<accession>Q8UW30</accession>
<accession>A3FM54</accession>
<protein>
    <recommendedName>
        <fullName>Basic phospholipase A2 73</fullName>
        <shortName>svPLA2</shortName>
        <ecNumber>3.1.1.4</ecNumber>
    </recommendedName>
    <alternativeName>
        <fullName>Phosphatidylcholine 2-acylhydrolase</fullName>
    </alternativeName>
</protein>
<comment type="function">
    <text evidence="1">Snake venom phospholipase A2 (PLA2) that inhibits neuromuscular transmission by blocking acetylcholine release from the nerve termini. PLA2 catalyzes the calcium-dependent hydrolysis of the 2-acyl groups in 3-sn-phosphoglycerides (By similarity).</text>
</comment>
<comment type="catalytic activity">
    <reaction evidence="3 4">
        <text>a 1,2-diacyl-sn-glycero-3-phosphocholine + H2O = a 1-acyl-sn-glycero-3-phosphocholine + a fatty acid + H(+)</text>
        <dbReference type="Rhea" id="RHEA:15801"/>
        <dbReference type="ChEBI" id="CHEBI:15377"/>
        <dbReference type="ChEBI" id="CHEBI:15378"/>
        <dbReference type="ChEBI" id="CHEBI:28868"/>
        <dbReference type="ChEBI" id="CHEBI:57643"/>
        <dbReference type="ChEBI" id="CHEBI:58168"/>
        <dbReference type="EC" id="3.1.1.4"/>
    </reaction>
</comment>
<comment type="cofactor">
    <cofactor evidence="1">
        <name>Ca(2+)</name>
        <dbReference type="ChEBI" id="CHEBI:29108"/>
    </cofactor>
    <text evidence="1">Binds 1 Ca(2+) ion.</text>
</comment>
<comment type="subcellular location">
    <subcellularLocation>
        <location evidence="1">Secreted</location>
    </subcellularLocation>
</comment>
<comment type="tissue specificity">
    <text>Expressed by the venom gland.</text>
</comment>
<comment type="similarity">
    <text evidence="5">Belongs to the phospholipase A2 family. Group I subfamily. D49 sub-subfamily.</text>
</comment>
<feature type="signal peptide" evidence="2">
    <location>
        <begin position="1"/>
        <end position="19"/>
    </location>
</feature>
<feature type="propeptide" id="PRO_0000419447" evidence="1">
    <location>
        <begin position="20"/>
        <end position="27"/>
    </location>
</feature>
<feature type="chain" id="PRO_0000022875" description="Basic phospholipase A2 73">
    <location>
        <begin position="28"/>
        <end position="146"/>
    </location>
</feature>
<feature type="active site" evidence="1">
    <location>
        <position position="75"/>
    </location>
</feature>
<feature type="active site" evidence="1">
    <location>
        <position position="120"/>
    </location>
</feature>
<feature type="binding site" evidence="1">
    <location>
        <position position="55"/>
    </location>
    <ligand>
        <name>Ca(2+)</name>
        <dbReference type="ChEBI" id="CHEBI:29108"/>
    </ligand>
</feature>
<feature type="binding site" evidence="1">
    <location>
        <position position="57"/>
    </location>
    <ligand>
        <name>Ca(2+)</name>
        <dbReference type="ChEBI" id="CHEBI:29108"/>
    </ligand>
</feature>
<feature type="binding site" evidence="1">
    <location>
        <position position="59"/>
    </location>
    <ligand>
        <name>Ca(2+)</name>
        <dbReference type="ChEBI" id="CHEBI:29108"/>
    </ligand>
</feature>
<feature type="binding site" evidence="1">
    <location>
        <position position="76"/>
    </location>
    <ligand>
        <name>Ca(2+)</name>
        <dbReference type="ChEBI" id="CHEBI:29108"/>
    </ligand>
</feature>
<feature type="disulfide bond" evidence="1">
    <location>
        <begin position="38"/>
        <end position="98"/>
    </location>
</feature>
<feature type="disulfide bond" evidence="1">
    <location>
        <begin position="54"/>
        <end position="145"/>
    </location>
</feature>
<feature type="disulfide bond" evidence="1">
    <location>
        <begin position="56"/>
        <end position="72"/>
    </location>
</feature>
<feature type="disulfide bond" evidence="1">
    <location>
        <begin position="71"/>
        <end position="126"/>
    </location>
</feature>
<feature type="disulfide bond" evidence="1">
    <location>
        <begin position="78"/>
        <end position="119"/>
    </location>
</feature>
<feature type="disulfide bond" evidence="1">
    <location>
        <begin position="87"/>
        <end position="112"/>
    </location>
</feature>
<feature type="disulfide bond" evidence="1">
    <location>
        <begin position="105"/>
        <end position="117"/>
    </location>
</feature>
<proteinExistence type="evidence at transcript level"/>
<keyword id="KW-0106">Calcium</keyword>
<keyword id="KW-1015">Disulfide bond</keyword>
<keyword id="KW-0378">Hydrolase</keyword>
<keyword id="KW-0442">Lipid degradation</keyword>
<keyword id="KW-0443">Lipid metabolism</keyword>
<keyword id="KW-0479">Metal-binding</keyword>
<keyword id="KW-0528">Neurotoxin</keyword>
<keyword id="KW-0638">Presynaptic neurotoxin</keyword>
<keyword id="KW-0964">Secreted</keyword>
<keyword id="KW-0732">Signal</keyword>
<keyword id="KW-0800">Toxin</keyword>
<sequence>MYPAHLLVLLAVCVSLLGAASIPPLPLNLVQFSYVITCANHNRRSSLDYADYGCYCGAGGSGTPVDELDRCCKIHDDCYGEAEKQGCYPKMLIYDYDCGSNGPYCKNVTKKCNRKVCDCDVAAAKCFARNAYNNANYNIDTKKRCK</sequence>
<organism>
    <name type="scientific">Hydrophis hardwickii</name>
    <name type="common">Hardwick's spine-bellied seasnake</name>
    <name type="synonym">Lapemis hardwickii</name>
    <dbReference type="NCBI Taxonomy" id="8781"/>
    <lineage>
        <taxon>Eukaryota</taxon>
        <taxon>Metazoa</taxon>
        <taxon>Chordata</taxon>
        <taxon>Craniata</taxon>
        <taxon>Vertebrata</taxon>
        <taxon>Euteleostomi</taxon>
        <taxon>Lepidosauria</taxon>
        <taxon>Squamata</taxon>
        <taxon>Bifurcata</taxon>
        <taxon>Unidentata</taxon>
        <taxon>Episquamata</taxon>
        <taxon>Toxicofera</taxon>
        <taxon>Serpentes</taxon>
        <taxon>Colubroidea</taxon>
        <taxon>Elapidae</taxon>
        <taxon>Hydrophiinae</taxon>
        <taxon>Hydrophis</taxon>
    </lineage>
</organism>
<evidence type="ECO:0000250" key="1"/>
<evidence type="ECO:0000255" key="2"/>
<evidence type="ECO:0000255" key="3">
    <source>
        <dbReference type="PROSITE-ProRule" id="PRU10035"/>
    </source>
</evidence>
<evidence type="ECO:0000255" key="4">
    <source>
        <dbReference type="PROSITE-ProRule" id="PRU10036"/>
    </source>
</evidence>
<evidence type="ECO:0000305" key="5"/>
<name>PA2B7_HYDHA</name>
<reference key="1">
    <citation type="submission" date="2007-01" db="EMBL/GenBank/DDBJ databases">
        <title>The study of the neurotoxins in sea snake using cDNA phage display technology.</title>
        <authorList>
            <person name="Tan T."/>
            <person name="Bi Q."/>
            <person name="Xiang X."/>
            <person name="Zhu S."/>
        </authorList>
    </citation>
    <scope>NUCLEOTIDE SEQUENCE [MRNA]</scope>
    <source>
        <tissue>Venom gland</tissue>
    </source>
</reference>
<reference key="2">
    <citation type="submission" date="1999-04" db="EMBL/GenBank/DDBJ databases">
        <title>Phospholipase A2 from Hardwick's sea snake.</title>
        <authorList>
            <person name="Zhao G."/>
            <person name="Wei J."/>
            <person name="Zhong X."/>
            <person name="Yang W."/>
            <person name="Xu A."/>
        </authorList>
    </citation>
    <scope>NUCLEOTIDE SEQUENCE [MRNA] OF 29-146</scope>
</reference>